<name>DPS_ECOHS</name>
<reference key="1">
    <citation type="journal article" date="2008" name="J. Bacteriol.">
        <title>The pangenome structure of Escherichia coli: comparative genomic analysis of E. coli commensal and pathogenic isolates.</title>
        <authorList>
            <person name="Rasko D.A."/>
            <person name="Rosovitz M.J."/>
            <person name="Myers G.S.A."/>
            <person name="Mongodin E.F."/>
            <person name="Fricke W.F."/>
            <person name="Gajer P."/>
            <person name="Crabtree J."/>
            <person name="Sebaihia M."/>
            <person name="Thomson N.R."/>
            <person name="Chaudhuri R."/>
            <person name="Henderson I.R."/>
            <person name="Sperandio V."/>
            <person name="Ravel J."/>
        </authorList>
    </citation>
    <scope>NUCLEOTIDE SEQUENCE [LARGE SCALE GENOMIC DNA]</scope>
    <source>
        <strain>HS</strain>
    </source>
</reference>
<comment type="function">
    <text evidence="1">During stationary phase, binds the chromosome non-specifically, forming a highly ordered and stable dps-DNA co-crystal within which chromosomal DNA is condensed and protected from diverse damages. It protects DNA from oxidative damage by sequestering intracellular Fe(2+) ion and storing it in the form of Fe(3+) oxyhydroxide mineral, which can be released after reduction. One hydrogen peroxide oxidizes two Fe(2+) ions, which prevents hydroxyl radical production by the Fenton reaction. Dps also protects the cell from UV and gamma irradiation, iron and copper toxicity, thermal stress and acid and base shocks. Also shows a weak catalase activity.</text>
</comment>
<comment type="catalytic activity">
    <reaction evidence="1">
        <text>2 Fe(2+) + H2O2 + 2 H(+) = 2 Fe(3+) + 2 H2O</text>
        <dbReference type="Rhea" id="RHEA:48712"/>
        <dbReference type="ChEBI" id="CHEBI:15377"/>
        <dbReference type="ChEBI" id="CHEBI:15378"/>
        <dbReference type="ChEBI" id="CHEBI:16240"/>
        <dbReference type="ChEBI" id="CHEBI:29033"/>
        <dbReference type="ChEBI" id="CHEBI:29034"/>
    </reaction>
</comment>
<comment type="subunit">
    <text evidence="1">Homododecamer. The 12 subunits form a hollow sphere into which the mineral iron core of up to 500 Fe(3+) can be deposited.</text>
</comment>
<comment type="subcellular location">
    <subcellularLocation>
        <location evidence="1">Cytoplasm</location>
        <location evidence="1">Nucleoid</location>
    </subcellularLocation>
</comment>
<comment type="similarity">
    <text evidence="1">Belongs to the Dps family.</text>
</comment>
<proteinExistence type="inferred from homology"/>
<sequence length="167" mass="18695">MSTAKLVKSKATNLLYTRNDVSDSEKKATVELLNRQVIQFIDLSLITKQAHWNMRGANFIAVHEMLDGFRTALIDHLDTMAERAVQLGGVALGTTQVINSKTPLKSYPLDIHNVQDHLKELADRYAIVANDVRKAIGEAKDDDTADILTAASRDLDKFLWFIESNIE</sequence>
<gene>
    <name evidence="1" type="primary">dps</name>
    <name type="ordered locus">EcHS_A0868</name>
</gene>
<keyword id="KW-0963">Cytoplasm</keyword>
<keyword id="KW-0226">DNA condensation</keyword>
<keyword id="KW-0238">DNA-binding</keyword>
<keyword id="KW-0408">Iron</keyword>
<keyword id="KW-0409">Iron storage</keyword>
<keyword id="KW-0479">Metal-binding</keyword>
<keyword id="KW-0560">Oxidoreductase</keyword>
<feature type="chain" id="PRO_1000068563" description="DNA protection during starvation protein">
    <location>
        <begin position="1"/>
        <end position="167"/>
    </location>
</feature>
<feature type="binding site" evidence="1">
    <location>
        <position position="51"/>
    </location>
    <ligand>
        <name>Fe cation</name>
        <dbReference type="ChEBI" id="CHEBI:24875"/>
        <label>1</label>
        <note>ligand shared between two dodecameric partners</note>
    </ligand>
</feature>
<feature type="binding site" description="in other chain" evidence="1">
    <location>
        <position position="78"/>
    </location>
    <ligand>
        <name>Fe cation</name>
        <dbReference type="ChEBI" id="CHEBI:24875"/>
        <label>1</label>
        <note>ligand shared between two dodecameric partners</note>
    </ligand>
</feature>
<feature type="binding site" description="in other chain" evidence="1">
    <location>
        <position position="82"/>
    </location>
    <ligand>
        <name>Fe cation</name>
        <dbReference type="ChEBI" id="CHEBI:24875"/>
        <label>1</label>
        <note>ligand shared between two dodecameric partners</note>
    </ligand>
</feature>
<feature type="binding site" evidence="1">
    <location>
        <position position="82"/>
    </location>
    <ligand>
        <name>Fe cation</name>
        <dbReference type="ChEBI" id="CHEBI:24875"/>
        <label>2</label>
    </ligand>
</feature>
<evidence type="ECO:0000255" key="1">
    <source>
        <dbReference type="HAMAP-Rule" id="MF_01441"/>
    </source>
</evidence>
<dbReference type="EC" id="1.16.-.-" evidence="1"/>
<dbReference type="EMBL" id="CP000802">
    <property type="protein sequence ID" value="ABV05224.1"/>
    <property type="molecule type" value="Genomic_DNA"/>
</dbReference>
<dbReference type="RefSeq" id="WP_000100800.1">
    <property type="nucleotide sequence ID" value="NC_009800.1"/>
</dbReference>
<dbReference type="SMR" id="A7ZY70"/>
<dbReference type="GeneID" id="93776616"/>
<dbReference type="KEGG" id="ecx:EcHS_A0868"/>
<dbReference type="HOGENOM" id="CLU_098183_1_2_6"/>
<dbReference type="GO" id="GO:0005737">
    <property type="term" value="C:cytoplasm"/>
    <property type="evidence" value="ECO:0007669"/>
    <property type="project" value="UniProtKB-UniRule"/>
</dbReference>
<dbReference type="GO" id="GO:0009295">
    <property type="term" value="C:nucleoid"/>
    <property type="evidence" value="ECO:0007669"/>
    <property type="project" value="UniProtKB-SubCell"/>
</dbReference>
<dbReference type="GO" id="GO:0003677">
    <property type="term" value="F:DNA binding"/>
    <property type="evidence" value="ECO:0007669"/>
    <property type="project" value="UniProtKB-UniRule"/>
</dbReference>
<dbReference type="GO" id="GO:0008199">
    <property type="term" value="F:ferric iron binding"/>
    <property type="evidence" value="ECO:0007669"/>
    <property type="project" value="UniProtKB-UniRule"/>
</dbReference>
<dbReference type="GO" id="GO:0016722">
    <property type="term" value="F:oxidoreductase activity, acting on metal ions"/>
    <property type="evidence" value="ECO:0007669"/>
    <property type="project" value="InterPro"/>
</dbReference>
<dbReference type="GO" id="GO:0030261">
    <property type="term" value="P:chromosome condensation"/>
    <property type="evidence" value="ECO:0007669"/>
    <property type="project" value="UniProtKB-KW"/>
</dbReference>
<dbReference type="GO" id="GO:0006879">
    <property type="term" value="P:intracellular iron ion homeostasis"/>
    <property type="evidence" value="ECO:0007669"/>
    <property type="project" value="UniProtKB-KW"/>
</dbReference>
<dbReference type="CDD" id="cd01043">
    <property type="entry name" value="DPS"/>
    <property type="match status" value="1"/>
</dbReference>
<dbReference type="FunFam" id="1.20.1260.10:FF:000003">
    <property type="entry name" value="DNA protection during starvation protein"/>
    <property type="match status" value="1"/>
</dbReference>
<dbReference type="Gene3D" id="1.20.1260.10">
    <property type="match status" value="1"/>
</dbReference>
<dbReference type="HAMAP" id="MF_01441">
    <property type="entry name" value="Dps"/>
    <property type="match status" value="1"/>
</dbReference>
<dbReference type="InterPro" id="IPR002177">
    <property type="entry name" value="DPS_DNA-bd"/>
</dbReference>
<dbReference type="InterPro" id="IPR023188">
    <property type="entry name" value="DPS_DNA-bd_CS"/>
</dbReference>
<dbReference type="InterPro" id="IPR023067">
    <property type="entry name" value="Dps_gammaproteobac"/>
</dbReference>
<dbReference type="InterPro" id="IPR012347">
    <property type="entry name" value="Ferritin-like"/>
</dbReference>
<dbReference type="InterPro" id="IPR009078">
    <property type="entry name" value="Ferritin-like_SF"/>
</dbReference>
<dbReference type="InterPro" id="IPR008331">
    <property type="entry name" value="Ferritin_DPS_dom"/>
</dbReference>
<dbReference type="NCBIfam" id="NF006975">
    <property type="entry name" value="PRK09448.1"/>
    <property type="match status" value="1"/>
</dbReference>
<dbReference type="PANTHER" id="PTHR42932:SF3">
    <property type="entry name" value="DNA PROTECTION DURING STARVATION PROTEIN"/>
    <property type="match status" value="1"/>
</dbReference>
<dbReference type="PANTHER" id="PTHR42932">
    <property type="entry name" value="GENERAL STRESS PROTEIN 20U"/>
    <property type="match status" value="1"/>
</dbReference>
<dbReference type="Pfam" id="PF00210">
    <property type="entry name" value="Ferritin"/>
    <property type="match status" value="1"/>
</dbReference>
<dbReference type="PIRSF" id="PIRSF005900">
    <property type="entry name" value="Dps"/>
    <property type="match status" value="1"/>
</dbReference>
<dbReference type="PRINTS" id="PR01346">
    <property type="entry name" value="HELNAPAPROT"/>
</dbReference>
<dbReference type="SUPFAM" id="SSF47240">
    <property type="entry name" value="Ferritin-like"/>
    <property type="match status" value="1"/>
</dbReference>
<dbReference type="PROSITE" id="PS00818">
    <property type="entry name" value="DPS_1"/>
    <property type="match status" value="1"/>
</dbReference>
<dbReference type="PROSITE" id="PS00819">
    <property type="entry name" value="DPS_2"/>
    <property type="match status" value="1"/>
</dbReference>
<protein>
    <recommendedName>
        <fullName evidence="1">DNA protection during starvation protein</fullName>
        <ecNumber evidence="1">1.16.-.-</ecNumber>
    </recommendedName>
</protein>
<accession>A7ZY70</accession>
<organism>
    <name type="scientific">Escherichia coli O9:H4 (strain HS)</name>
    <dbReference type="NCBI Taxonomy" id="331112"/>
    <lineage>
        <taxon>Bacteria</taxon>
        <taxon>Pseudomonadati</taxon>
        <taxon>Pseudomonadota</taxon>
        <taxon>Gammaproteobacteria</taxon>
        <taxon>Enterobacterales</taxon>
        <taxon>Enterobacteriaceae</taxon>
        <taxon>Escherichia</taxon>
    </lineage>
</organism>